<gene>
    <name evidence="1" type="primary">pyrG</name>
    <name type="ordered locus">BCAN_A1153</name>
</gene>
<sequence length="542" mass="60058">MARYVFITGGVVSSLGKGIAAAALAALLQARGYRVRIRKLDPYLNVDPGTISPYQHGEVFVTDDGAETDLDLGHYERFTGRPANQQDNITTGRIYRNIIEKERRGDYLGATVQVIPHVTDEIKNFVLEGNEDYDFVLCEIGGTVGDIEAMPFLEAIRQLGNELPRGTAVYIHLTLMPYIPAAGELKTKPTQHSVKELRSIGIAPDILLVRADREIPESERRKLSLFCNVRESAVIQALDVATIYDVPIAYHKEGLDSEVLSAFGIDPAPKPRMDRWEEVSHRLHNPEGEVTIAVVGKYTGLKDAYKSLIEALHHGGLANKVKVNLDWIEAQVFESEDPAPYLEKVHGILVPGGFGERGAEGKILAAKFARERKVPYFGICFGMQMACIEAARNLVGIEDASSSEFGPTREPVVGLMTEWLKGNMLEKRAAAGDLGGTMRLGAYEAVLKPDSKIAQIYGSTDIHERHRHRYEVNIDYKDRLEAAGLNFAGMSPDGVLPETVEYADHPWFIGVQYHPELKSRPFEPHPLFASFIEAAIEQSRLV</sequence>
<accession>A9M5E7</accession>
<name>PYRG_BRUC2</name>
<organism>
    <name type="scientific">Brucella canis (strain ATCC 23365 / NCTC 10854 / RM-666)</name>
    <dbReference type="NCBI Taxonomy" id="483179"/>
    <lineage>
        <taxon>Bacteria</taxon>
        <taxon>Pseudomonadati</taxon>
        <taxon>Pseudomonadota</taxon>
        <taxon>Alphaproteobacteria</taxon>
        <taxon>Hyphomicrobiales</taxon>
        <taxon>Brucellaceae</taxon>
        <taxon>Brucella/Ochrobactrum group</taxon>
        <taxon>Brucella</taxon>
    </lineage>
</organism>
<feature type="chain" id="PRO_1000139393" description="CTP synthase">
    <location>
        <begin position="1"/>
        <end position="542"/>
    </location>
</feature>
<feature type="domain" description="Glutamine amidotransferase type-1" evidence="1">
    <location>
        <begin position="291"/>
        <end position="541"/>
    </location>
</feature>
<feature type="region of interest" description="Amidoligase domain" evidence="1">
    <location>
        <begin position="1"/>
        <end position="265"/>
    </location>
</feature>
<feature type="active site" description="Nucleophile; for glutamine hydrolysis" evidence="1">
    <location>
        <position position="380"/>
    </location>
</feature>
<feature type="active site" evidence="1">
    <location>
        <position position="514"/>
    </location>
</feature>
<feature type="active site" evidence="1">
    <location>
        <position position="516"/>
    </location>
</feature>
<feature type="binding site" evidence="1">
    <location>
        <position position="13"/>
    </location>
    <ligand>
        <name>CTP</name>
        <dbReference type="ChEBI" id="CHEBI:37563"/>
        <note>allosteric inhibitor</note>
    </ligand>
</feature>
<feature type="binding site" evidence="1">
    <location>
        <position position="13"/>
    </location>
    <ligand>
        <name>UTP</name>
        <dbReference type="ChEBI" id="CHEBI:46398"/>
    </ligand>
</feature>
<feature type="binding site" evidence="1">
    <location>
        <begin position="14"/>
        <end position="19"/>
    </location>
    <ligand>
        <name>ATP</name>
        <dbReference type="ChEBI" id="CHEBI:30616"/>
    </ligand>
</feature>
<feature type="binding site" evidence="1">
    <location>
        <position position="54"/>
    </location>
    <ligand>
        <name>L-glutamine</name>
        <dbReference type="ChEBI" id="CHEBI:58359"/>
    </ligand>
</feature>
<feature type="binding site" evidence="1">
    <location>
        <position position="71"/>
    </location>
    <ligand>
        <name>ATP</name>
        <dbReference type="ChEBI" id="CHEBI:30616"/>
    </ligand>
</feature>
<feature type="binding site" evidence="1">
    <location>
        <position position="71"/>
    </location>
    <ligand>
        <name>Mg(2+)</name>
        <dbReference type="ChEBI" id="CHEBI:18420"/>
    </ligand>
</feature>
<feature type="binding site" evidence="1">
    <location>
        <position position="139"/>
    </location>
    <ligand>
        <name>Mg(2+)</name>
        <dbReference type="ChEBI" id="CHEBI:18420"/>
    </ligand>
</feature>
<feature type="binding site" evidence="1">
    <location>
        <begin position="146"/>
        <end position="148"/>
    </location>
    <ligand>
        <name>CTP</name>
        <dbReference type="ChEBI" id="CHEBI:37563"/>
        <note>allosteric inhibitor</note>
    </ligand>
</feature>
<feature type="binding site" evidence="1">
    <location>
        <begin position="186"/>
        <end position="191"/>
    </location>
    <ligand>
        <name>CTP</name>
        <dbReference type="ChEBI" id="CHEBI:37563"/>
        <note>allosteric inhibitor</note>
    </ligand>
</feature>
<feature type="binding site" evidence="1">
    <location>
        <begin position="186"/>
        <end position="191"/>
    </location>
    <ligand>
        <name>UTP</name>
        <dbReference type="ChEBI" id="CHEBI:46398"/>
    </ligand>
</feature>
<feature type="binding site" evidence="1">
    <location>
        <position position="222"/>
    </location>
    <ligand>
        <name>CTP</name>
        <dbReference type="ChEBI" id="CHEBI:37563"/>
        <note>allosteric inhibitor</note>
    </ligand>
</feature>
<feature type="binding site" evidence="1">
    <location>
        <position position="222"/>
    </location>
    <ligand>
        <name>UTP</name>
        <dbReference type="ChEBI" id="CHEBI:46398"/>
    </ligand>
</feature>
<feature type="binding site" evidence="1">
    <location>
        <position position="353"/>
    </location>
    <ligand>
        <name>L-glutamine</name>
        <dbReference type="ChEBI" id="CHEBI:58359"/>
    </ligand>
</feature>
<feature type="binding site" evidence="1">
    <location>
        <begin position="381"/>
        <end position="384"/>
    </location>
    <ligand>
        <name>L-glutamine</name>
        <dbReference type="ChEBI" id="CHEBI:58359"/>
    </ligand>
</feature>
<feature type="binding site" evidence="1">
    <location>
        <position position="404"/>
    </location>
    <ligand>
        <name>L-glutamine</name>
        <dbReference type="ChEBI" id="CHEBI:58359"/>
    </ligand>
</feature>
<feature type="binding site" evidence="1">
    <location>
        <position position="469"/>
    </location>
    <ligand>
        <name>L-glutamine</name>
        <dbReference type="ChEBI" id="CHEBI:58359"/>
    </ligand>
</feature>
<protein>
    <recommendedName>
        <fullName evidence="1">CTP synthase</fullName>
        <ecNumber evidence="1">6.3.4.2</ecNumber>
    </recommendedName>
    <alternativeName>
        <fullName evidence="1">Cytidine 5'-triphosphate synthase</fullName>
    </alternativeName>
    <alternativeName>
        <fullName evidence="1">Cytidine triphosphate synthetase</fullName>
        <shortName evidence="1">CTP synthetase</shortName>
        <shortName evidence="1">CTPS</shortName>
    </alternativeName>
    <alternativeName>
        <fullName evidence="1">UTP--ammonia ligase</fullName>
    </alternativeName>
</protein>
<reference key="1">
    <citation type="submission" date="2007-10" db="EMBL/GenBank/DDBJ databases">
        <title>Brucella canis ATCC 23365 whole genome shotgun sequencing project.</title>
        <authorList>
            <person name="Setubal J.C."/>
            <person name="Bowns C."/>
            <person name="Boyle S."/>
            <person name="Crasta O.R."/>
            <person name="Czar M.J."/>
            <person name="Dharmanolla C."/>
            <person name="Gillespie J.J."/>
            <person name="Kenyon R.W."/>
            <person name="Lu J."/>
            <person name="Mane S."/>
            <person name="Mohapatra S."/>
            <person name="Nagrani S."/>
            <person name="Purkayastha A."/>
            <person name="Rajasimha H.K."/>
            <person name="Shallom J.M."/>
            <person name="Shallom S."/>
            <person name="Shukla M."/>
            <person name="Snyder E.E."/>
            <person name="Sobral B.W."/>
            <person name="Wattam A.R."/>
            <person name="Will R."/>
            <person name="Williams K."/>
            <person name="Yoo H."/>
            <person name="Bruce D."/>
            <person name="Detter C."/>
            <person name="Munk C."/>
            <person name="Brettin T.S."/>
        </authorList>
    </citation>
    <scope>NUCLEOTIDE SEQUENCE [LARGE SCALE GENOMIC DNA]</scope>
    <source>
        <strain>ATCC 23365 / NCTC 10854 / RM-666</strain>
    </source>
</reference>
<comment type="function">
    <text evidence="1">Catalyzes the ATP-dependent amination of UTP to CTP with either L-glutamine or ammonia as the source of nitrogen. Regulates intracellular CTP levels through interactions with the four ribonucleotide triphosphates.</text>
</comment>
<comment type="catalytic activity">
    <reaction evidence="1">
        <text>UTP + L-glutamine + ATP + H2O = CTP + L-glutamate + ADP + phosphate + 2 H(+)</text>
        <dbReference type="Rhea" id="RHEA:26426"/>
        <dbReference type="ChEBI" id="CHEBI:15377"/>
        <dbReference type="ChEBI" id="CHEBI:15378"/>
        <dbReference type="ChEBI" id="CHEBI:29985"/>
        <dbReference type="ChEBI" id="CHEBI:30616"/>
        <dbReference type="ChEBI" id="CHEBI:37563"/>
        <dbReference type="ChEBI" id="CHEBI:43474"/>
        <dbReference type="ChEBI" id="CHEBI:46398"/>
        <dbReference type="ChEBI" id="CHEBI:58359"/>
        <dbReference type="ChEBI" id="CHEBI:456216"/>
        <dbReference type="EC" id="6.3.4.2"/>
    </reaction>
</comment>
<comment type="catalytic activity">
    <reaction evidence="1">
        <text>L-glutamine + H2O = L-glutamate + NH4(+)</text>
        <dbReference type="Rhea" id="RHEA:15889"/>
        <dbReference type="ChEBI" id="CHEBI:15377"/>
        <dbReference type="ChEBI" id="CHEBI:28938"/>
        <dbReference type="ChEBI" id="CHEBI:29985"/>
        <dbReference type="ChEBI" id="CHEBI:58359"/>
    </reaction>
</comment>
<comment type="catalytic activity">
    <reaction evidence="1">
        <text>UTP + NH4(+) + ATP = CTP + ADP + phosphate + 2 H(+)</text>
        <dbReference type="Rhea" id="RHEA:16597"/>
        <dbReference type="ChEBI" id="CHEBI:15378"/>
        <dbReference type="ChEBI" id="CHEBI:28938"/>
        <dbReference type="ChEBI" id="CHEBI:30616"/>
        <dbReference type="ChEBI" id="CHEBI:37563"/>
        <dbReference type="ChEBI" id="CHEBI:43474"/>
        <dbReference type="ChEBI" id="CHEBI:46398"/>
        <dbReference type="ChEBI" id="CHEBI:456216"/>
    </reaction>
</comment>
<comment type="activity regulation">
    <text evidence="1">Allosterically activated by GTP, when glutamine is the substrate; GTP has no effect on the reaction when ammonia is the substrate. The allosteric effector GTP functions by stabilizing the protein conformation that binds the tetrahedral intermediate(s) formed during glutamine hydrolysis. Inhibited by the product CTP, via allosteric rather than competitive inhibition.</text>
</comment>
<comment type="pathway">
    <text evidence="1">Pyrimidine metabolism; CTP biosynthesis via de novo pathway; CTP from UDP: step 2/2.</text>
</comment>
<comment type="subunit">
    <text evidence="1">Homotetramer.</text>
</comment>
<comment type="miscellaneous">
    <text evidence="1">CTPSs have evolved a hybrid strategy for distinguishing between UTP and CTP. The overlapping regions of the product feedback inhibitory and substrate sites recognize a common feature in both compounds, the triphosphate moiety. To differentiate isosteric substrate and product pyrimidine rings, an additional pocket far from the expected kinase/ligase catalytic site, specifically recognizes the cytosine and ribose portions of the product inhibitor.</text>
</comment>
<comment type="similarity">
    <text evidence="1">Belongs to the CTP synthase family.</text>
</comment>
<dbReference type="EC" id="6.3.4.2" evidence="1"/>
<dbReference type="EMBL" id="CP000872">
    <property type="protein sequence ID" value="ABX62202.1"/>
    <property type="molecule type" value="Genomic_DNA"/>
</dbReference>
<dbReference type="RefSeq" id="WP_004690886.1">
    <property type="nucleotide sequence ID" value="NC_010103.1"/>
</dbReference>
<dbReference type="SMR" id="A9M5E7"/>
<dbReference type="MEROPS" id="C26.964"/>
<dbReference type="GeneID" id="55590818"/>
<dbReference type="KEGG" id="bcs:BCAN_A1153"/>
<dbReference type="HOGENOM" id="CLU_011675_5_0_5"/>
<dbReference type="PhylomeDB" id="A9M5E7"/>
<dbReference type="UniPathway" id="UPA00159">
    <property type="reaction ID" value="UER00277"/>
</dbReference>
<dbReference type="Proteomes" id="UP000001385">
    <property type="component" value="Chromosome I"/>
</dbReference>
<dbReference type="GO" id="GO:0005829">
    <property type="term" value="C:cytosol"/>
    <property type="evidence" value="ECO:0007669"/>
    <property type="project" value="TreeGrafter"/>
</dbReference>
<dbReference type="GO" id="GO:0005524">
    <property type="term" value="F:ATP binding"/>
    <property type="evidence" value="ECO:0007669"/>
    <property type="project" value="UniProtKB-KW"/>
</dbReference>
<dbReference type="GO" id="GO:0003883">
    <property type="term" value="F:CTP synthase activity"/>
    <property type="evidence" value="ECO:0007669"/>
    <property type="project" value="UniProtKB-UniRule"/>
</dbReference>
<dbReference type="GO" id="GO:0004359">
    <property type="term" value="F:glutaminase activity"/>
    <property type="evidence" value="ECO:0007669"/>
    <property type="project" value="RHEA"/>
</dbReference>
<dbReference type="GO" id="GO:0042802">
    <property type="term" value="F:identical protein binding"/>
    <property type="evidence" value="ECO:0007669"/>
    <property type="project" value="TreeGrafter"/>
</dbReference>
<dbReference type="GO" id="GO:0046872">
    <property type="term" value="F:metal ion binding"/>
    <property type="evidence" value="ECO:0007669"/>
    <property type="project" value="UniProtKB-KW"/>
</dbReference>
<dbReference type="GO" id="GO:0044210">
    <property type="term" value="P:'de novo' CTP biosynthetic process"/>
    <property type="evidence" value="ECO:0007669"/>
    <property type="project" value="UniProtKB-UniRule"/>
</dbReference>
<dbReference type="GO" id="GO:0019856">
    <property type="term" value="P:pyrimidine nucleobase biosynthetic process"/>
    <property type="evidence" value="ECO:0007669"/>
    <property type="project" value="TreeGrafter"/>
</dbReference>
<dbReference type="CDD" id="cd03113">
    <property type="entry name" value="CTPS_N"/>
    <property type="match status" value="1"/>
</dbReference>
<dbReference type="CDD" id="cd01746">
    <property type="entry name" value="GATase1_CTP_Synthase"/>
    <property type="match status" value="1"/>
</dbReference>
<dbReference type="FunFam" id="3.40.50.300:FF:000009">
    <property type="entry name" value="CTP synthase"/>
    <property type="match status" value="1"/>
</dbReference>
<dbReference type="FunFam" id="3.40.50.880:FF:000002">
    <property type="entry name" value="CTP synthase"/>
    <property type="match status" value="1"/>
</dbReference>
<dbReference type="Gene3D" id="3.40.50.880">
    <property type="match status" value="1"/>
</dbReference>
<dbReference type="Gene3D" id="3.40.50.300">
    <property type="entry name" value="P-loop containing nucleotide triphosphate hydrolases"/>
    <property type="match status" value="1"/>
</dbReference>
<dbReference type="HAMAP" id="MF_01227">
    <property type="entry name" value="PyrG"/>
    <property type="match status" value="1"/>
</dbReference>
<dbReference type="InterPro" id="IPR029062">
    <property type="entry name" value="Class_I_gatase-like"/>
</dbReference>
<dbReference type="InterPro" id="IPR004468">
    <property type="entry name" value="CTP_synthase"/>
</dbReference>
<dbReference type="InterPro" id="IPR017456">
    <property type="entry name" value="CTP_synthase_N"/>
</dbReference>
<dbReference type="InterPro" id="IPR017926">
    <property type="entry name" value="GATASE"/>
</dbReference>
<dbReference type="InterPro" id="IPR033828">
    <property type="entry name" value="GATase1_CTP_Synthase"/>
</dbReference>
<dbReference type="InterPro" id="IPR027417">
    <property type="entry name" value="P-loop_NTPase"/>
</dbReference>
<dbReference type="NCBIfam" id="NF003792">
    <property type="entry name" value="PRK05380.1"/>
    <property type="match status" value="1"/>
</dbReference>
<dbReference type="NCBIfam" id="TIGR00337">
    <property type="entry name" value="PyrG"/>
    <property type="match status" value="1"/>
</dbReference>
<dbReference type="PANTHER" id="PTHR11550">
    <property type="entry name" value="CTP SYNTHASE"/>
    <property type="match status" value="1"/>
</dbReference>
<dbReference type="PANTHER" id="PTHR11550:SF0">
    <property type="entry name" value="CTP SYNTHASE-RELATED"/>
    <property type="match status" value="1"/>
</dbReference>
<dbReference type="Pfam" id="PF06418">
    <property type="entry name" value="CTP_synth_N"/>
    <property type="match status" value="1"/>
</dbReference>
<dbReference type="Pfam" id="PF00117">
    <property type="entry name" value="GATase"/>
    <property type="match status" value="1"/>
</dbReference>
<dbReference type="SUPFAM" id="SSF52317">
    <property type="entry name" value="Class I glutamine amidotransferase-like"/>
    <property type="match status" value="1"/>
</dbReference>
<dbReference type="SUPFAM" id="SSF52540">
    <property type="entry name" value="P-loop containing nucleoside triphosphate hydrolases"/>
    <property type="match status" value="1"/>
</dbReference>
<dbReference type="PROSITE" id="PS51273">
    <property type="entry name" value="GATASE_TYPE_1"/>
    <property type="match status" value="1"/>
</dbReference>
<keyword id="KW-0067">ATP-binding</keyword>
<keyword id="KW-0315">Glutamine amidotransferase</keyword>
<keyword id="KW-0436">Ligase</keyword>
<keyword id="KW-0460">Magnesium</keyword>
<keyword id="KW-0479">Metal-binding</keyword>
<keyword id="KW-0547">Nucleotide-binding</keyword>
<keyword id="KW-0665">Pyrimidine biosynthesis</keyword>
<keyword id="KW-1185">Reference proteome</keyword>
<evidence type="ECO:0000255" key="1">
    <source>
        <dbReference type="HAMAP-Rule" id="MF_01227"/>
    </source>
</evidence>
<proteinExistence type="inferred from homology"/>